<proteinExistence type="evidence at protein level"/>
<name>TTR_PSEAJ</name>
<accession>P16966</accession>
<comment type="function">
    <text evidence="2">Renders tabtoxin-producing pathogens tolerant to their own phytotoxins.</text>
</comment>
<comment type="miscellaneous">
    <text>Tabtoxin causes wildfire disease of tobacco.</text>
</comment>
<evidence type="ECO:0000255" key="1">
    <source>
        <dbReference type="PROSITE-ProRule" id="PRU00532"/>
    </source>
</evidence>
<evidence type="ECO:0000269" key="2">
    <source>
    </source>
</evidence>
<evidence type="ECO:0007829" key="3">
    <source>
        <dbReference type="PDB" id="1GHE"/>
    </source>
</evidence>
<protein>
    <recommendedName>
        <fullName>Acetyltransferase</fullName>
        <ecNumber>2.3.1.-</ecNumber>
    </recommendedName>
    <alternativeName>
        <fullName>Tabtoxin resistance protein</fullName>
    </alternativeName>
</protein>
<reference key="1">
    <citation type="journal article" date="1990" name="Nucleic Acids Res.">
        <title>The nucleotide sequence of tabtoxin resistance gene (ttr) of Pseudomonas syringae pv. tabaci.</title>
        <authorList>
            <person name="Anzai H."/>
            <person name="Yoneyama K."/>
            <person name="Yamaguchi I."/>
        </authorList>
    </citation>
    <scope>NUCLEOTIDE SEQUENCE [GENOMIC DNA]</scope>
    <source>
        <strain>MAFF03-01075</strain>
    </source>
</reference>
<reference key="2">
    <citation type="journal article" date="2003" name="J. Mol. Biol.">
        <title>Crystal structure of tabtoxin resistance protein complexed with acetyl coenzyme A reveals the mechanism for beta-lactam acetylation.</title>
        <authorList>
            <person name="He H."/>
            <person name="Ding Y."/>
            <person name="Bartlam M."/>
            <person name="Sun F."/>
            <person name="Le Y."/>
            <person name="Qin X."/>
            <person name="Tang H."/>
            <person name="Zhang R."/>
            <person name="Joachimiak A."/>
            <person name="Liu J."/>
            <person name="Zhao N."/>
            <person name="Rao Z."/>
        </authorList>
    </citation>
    <scope>X-RAY CRYSTALLOGRAPHY (1.55 ANGSTROMS) IN COMPLEX WITH ACETYL-COA</scope>
    <scope>FUNCTION</scope>
</reference>
<gene>
    <name type="primary">ttr</name>
</gene>
<organism>
    <name type="scientific">Pseudomonas amygdali pv. tabaci</name>
    <name type="common">Pseudomonas syringae pv. tabaci</name>
    <dbReference type="NCBI Taxonomy" id="322"/>
    <lineage>
        <taxon>Bacteria</taxon>
        <taxon>Pseudomonadati</taxon>
        <taxon>Pseudomonadota</taxon>
        <taxon>Gammaproteobacteria</taxon>
        <taxon>Pseudomonadales</taxon>
        <taxon>Pseudomonadaceae</taxon>
        <taxon>Pseudomonas</taxon>
        <taxon>Pseudomonas amygdali</taxon>
    </lineage>
</organism>
<keyword id="KW-0002">3D-structure</keyword>
<keyword id="KW-0012">Acyltransferase</keyword>
<keyword id="KW-0808">Transferase</keyword>
<sequence length="177" mass="19235">MNHAQLRRVTAESFAHYRHGLAQLLFETVHGGASVGFMADLDMQQAYAWCDGLKADIAAGSLLLWVVAEDDNVLASAQLSLCQKPNGLNRAEVQKLMVLPSARGRGLGRQLMDEVEQVAVKHKRGLLHLDTEAGSVAEAFYSALAYTRVGELPGYCATPDGRLHPTAIYFKTLGQPT</sequence>
<dbReference type="EC" id="2.3.1.-"/>
<dbReference type="EMBL" id="X17150">
    <property type="protein sequence ID" value="CAA35037.1"/>
    <property type="molecule type" value="Genomic_DNA"/>
</dbReference>
<dbReference type="PIR" id="S09214">
    <property type="entry name" value="S09214"/>
</dbReference>
<dbReference type="RefSeq" id="WP_002555402.1">
    <property type="nucleotide sequence ID" value="NZ_RBSE01000043.1"/>
</dbReference>
<dbReference type="PDB" id="1GHE">
    <property type="method" value="X-ray"/>
    <property type="resolution" value="1.55 A"/>
    <property type="chains" value="A/B=1-177"/>
</dbReference>
<dbReference type="PDB" id="1J4J">
    <property type="method" value="X-ray"/>
    <property type="resolution" value="2.55 A"/>
    <property type="chains" value="A/B=1-177"/>
</dbReference>
<dbReference type="PDBsum" id="1GHE"/>
<dbReference type="PDBsum" id="1J4J"/>
<dbReference type="SMR" id="P16966"/>
<dbReference type="GeneID" id="61872015"/>
<dbReference type="KEGG" id="ag:CAA35037"/>
<dbReference type="BioCyc" id="MetaCyc:MONOMER-20391"/>
<dbReference type="EvolutionaryTrace" id="P16966"/>
<dbReference type="GO" id="GO:0016747">
    <property type="term" value="F:acyltransferase activity, transferring groups other than amino-acyl groups"/>
    <property type="evidence" value="ECO:0007669"/>
    <property type="project" value="InterPro"/>
</dbReference>
<dbReference type="CDD" id="cd04301">
    <property type="entry name" value="NAT_SF"/>
    <property type="match status" value="1"/>
</dbReference>
<dbReference type="FunFam" id="3.40.630.30:FF:000068">
    <property type="entry name" value="Tabtoxin resistance protein"/>
    <property type="match status" value="1"/>
</dbReference>
<dbReference type="Gene3D" id="3.40.630.30">
    <property type="match status" value="1"/>
</dbReference>
<dbReference type="InterPro" id="IPR016181">
    <property type="entry name" value="Acyl_CoA_acyltransferase"/>
</dbReference>
<dbReference type="InterPro" id="IPR050832">
    <property type="entry name" value="Bact_Acetyltransf"/>
</dbReference>
<dbReference type="InterPro" id="IPR000182">
    <property type="entry name" value="GNAT_dom"/>
</dbReference>
<dbReference type="PANTHER" id="PTHR43877:SF2">
    <property type="entry name" value="AMINOALKYLPHOSPHONATE N-ACETYLTRANSFERASE-RELATED"/>
    <property type="match status" value="1"/>
</dbReference>
<dbReference type="PANTHER" id="PTHR43877">
    <property type="entry name" value="AMINOALKYLPHOSPHONATE N-ACETYLTRANSFERASE-RELATED-RELATED"/>
    <property type="match status" value="1"/>
</dbReference>
<dbReference type="Pfam" id="PF00583">
    <property type="entry name" value="Acetyltransf_1"/>
    <property type="match status" value="1"/>
</dbReference>
<dbReference type="SUPFAM" id="SSF55729">
    <property type="entry name" value="Acyl-CoA N-acyltransferases (Nat)"/>
    <property type="match status" value="1"/>
</dbReference>
<dbReference type="PROSITE" id="PS51186">
    <property type="entry name" value="GNAT"/>
    <property type="match status" value="1"/>
</dbReference>
<feature type="chain" id="PRO_0000065680" description="Acetyltransferase">
    <location>
        <begin position="1"/>
        <end position="177"/>
    </location>
</feature>
<feature type="domain" description="N-acetyltransferase" evidence="1">
    <location>
        <begin position="4"/>
        <end position="174"/>
    </location>
</feature>
<feature type="binding site" evidence="2">
    <location>
        <position position="27"/>
    </location>
    <ligand>
        <name>acetyl-CoA</name>
        <dbReference type="ChEBI" id="CHEBI:57288"/>
    </ligand>
</feature>
<feature type="binding site">
    <location>
        <begin position="96"/>
        <end position="98"/>
    </location>
    <ligand>
        <name>acetyl-CoA</name>
        <dbReference type="ChEBI" id="CHEBI:57288"/>
    </ligand>
</feature>
<feature type="binding site">
    <location>
        <begin position="104"/>
        <end position="109"/>
    </location>
    <ligand>
        <name>acetyl-CoA</name>
        <dbReference type="ChEBI" id="CHEBI:57288"/>
    </ligand>
</feature>
<feature type="binding site">
    <location>
        <begin position="130"/>
        <end position="131"/>
    </location>
    <ligand>
        <name>acetyl-CoA</name>
        <dbReference type="ChEBI" id="CHEBI:57288"/>
    </ligand>
</feature>
<feature type="binding site" evidence="2">
    <location>
        <position position="141"/>
    </location>
    <ligand>
        <name>acetyl-CoA</name>
        <dbReference type="ChEBI" id="CHEBI:57288"/>
    </ligand>
</feature>
<feature type="strand" evidence="3">
    <location>
        <begin position="5"/>
        <end position="8"/>
    </location>
</feature>
<feature type="turn" evidence="3">
    <location>
        <begin position="11"/>
        <end position="13"/>
    </location>
</feature>
<feature type="helix" evidence="3">
    <location>
        <begin position="14"/>
        <end position="30"/>
    </location>
</feature>
<feature type="helix" evidence="3">
    <location>
        <begin position="43"/>
        <end position="51"/>
    </location>
</feature>
<feature type="helix" evidence="3">
    <location>
        <begin position="54"/>
        <end position="59"/>
    </location>
</feature>
<feature type="strand" evidence="3">
    <location>
        <begin position="60"/>
        <end position="69"/>
    </location>
</feature>
<feature type="strand" evidence="3">
    <location>
        <begin position="72"/>
        <end position="81"/>
    </location>
</feature>
<feature type="strand" evidence="3">
    <location>
        <begin position="90"/>
        <end position="98"/>
    </location>
</feature>
<feature type="helix" evidence="3">
    <location>
        <begin position="100"/>
        <end position="102"/>
    </location>
</feature>
<feature type="helix" evidence="3">
    <location>
        <begin position="107"/>
        <end position="121"/>
    </location>
</feature>
<feature type="strand" evidence="3">
    <location>
        <begin position="126"/>
        <end position="132"/>
    </location>
</feature>
<feature type="helix" evidence="3">
    <location>
        <begin position="136"/>
        <end position="143"/>
    </location>
</feature>
<feature type="strand" evidence="3">
    <location>
        <begin position="147"/>
        <end position="157"/>
    </location>
</feature>
<feature type="strand" evidence="3">
    <location>
        <begin position="163"/>
        <end position="172"/>
    </location>
</feature>